<proteinExistence type="inferred from homology"/>
<name>RS19_SHEWM</name>
<reference key="1">
    <citation type="submission" date="2008-02" db="EMBL/GenBank/DDBJ databases">
        <title>Complete sequence of Shewanella woodyi ATCC 51908.</title>
        <authorList>
            <consortium name="US DOE Joint Genome Institute"/>
            <person name="Copeland A."/>
            <person name="Lucas S."/>
            <person name="Lapidus A."/>
            <person name="Glavina del Rio T."/>
            <person name="Dalin E."/>
            <person name="Tice H."/>
            <person name="Bruce D."/>
            <person name="Goodwin L."/>
            <person name="Pitluck S."/>
            <person name="Sims D."/>
            <person name="Brettin T."/>
            <person name="Detter J.C."/>
            <person name="Han C."/>
            <person name="Kuske C.R."/>
            <person name="Schmutz J."/>
            <person name="Larimer F."/>
            <person name="Land M."/>
            <person name="Hauser L."/>
            <person name="Kyrpides N."/>
            <person name="Lykidis A."/>
            <person name="Zhao J.-S."/>
            <person name="Richardson P."/>
        </authorList>
    </citation>
    <scope>NUCLEOTIDE SEQUENCE [LARGE SCALE GENOMIC DNA]</scope>
    <source>
        <strain>ATCC 51908 / MS32</strain>
    </source>
</reference>
<feature type="chain" id="PRO_1000128037" description="Small ribosomal subunit protein uS19">
    <location>
        <begin position="1"/>
        <end position="92"/>
    </location>
</feature>
<dbReference type="EMBL" id="CP000961">
    <property type="protein sequence ID" value="ACA88936.1"/>
    <property type="molecule type" value="Genomic_DNA"/>
</dbReference>
<dbReference type="RefSeq" id="WP_006083596.1">
    <property type="nucleotide sequence ID" value="NC_010506.1"/>
</dbReference>
<dbReference type="SMR" id="B1KMX9"/>
<dbReference type="STRING" id="392500.Swoo_4686"/>
<dbReference type="GeneID" id="94726190"/>
<dbReference type="KEGG" id="swd:Swoo_4686"/>
<dbReference type="eggNOG" id="COG0185">
    <property type="taxonomic scope" value="Bacteria"/>
</dbReference>
<dbReference type="HOGENOM" id="CLU_144911_0_1_6"/>
<dbReference type="Proteomes" id="UP000002168">
    <property type="component" value="Chromosome"/>
</dbReference>
<dbReference type="GO" id="GO:0005737">
    <property type="term" value="C:cytoplasm"/>
    <property type="evidence" value="ECO:0007669"/>
    <property type="project" value="UniProtKB-ARBA"/>
</dbReference>
<dbReference type="GO" id="GO:0015935">
    <property type="term" value="C:small ribosomal subunit"/>
    <property type="evidence" value="ECO:0007669"/>
    <property type="project" value="InterPro"/>
</dbReference>
<dbReference type="GO" id="GO:0019843">
    <property type="term" value="F:rRNA binding"/>
    <property type="evidence" value="ECO:0007669"/>
    <property type="project" value="UniProtKB-UniRule"/>
</dbReference>
<dbReference type="GO" id="GO:0003735">
    <property type="term" value="F:structural constituent of ribosome"/>
    <property type="evidence" value="ECO:0007669"/>
    <property type="project" value="InterPro"/>
</dbReference>
<dbReference type="GO" id="GO:0000028">
    <property type="term" value="P:ribosomal small subunit assembly"/>
    <property type="evidence" value="ECO:0007669"/>
    <property type="project" value="TreeGrafter"/>
</dbReference>
<dbReference type="GO" id="GO:0006412">
    <property type="term" value="P:translation"/>
    <property type="evidence" value="ECO:0007669"/>
    <property type="project" value="UniProtKB-UniRule"/>
</dbReference>
<dbReference type="FunFam" id="3.30.860.10:FF:000001">
    <property type="entry name" value="30S ribosomal protein S19"/>
    <property type="match status" value="1"/>
</dbReference>
<dbReference type="Gene3D" id="3.30.860.10">
    <property type="entry name" value="30s Ribosomal Protein S19, Chain A"/>
    <property type="match status" value="1"/>
</dbReference>
<dbReference type="HAMAP" id="MF_00531">
    <property type="entry name" value="Ribosomal_uS19"/>
    <property type="match status" value="1"/>
</dbReference>
<dbReference type="InterPro" id="IPR002222">
    <property type="entry name" value="Ribosomal_uS19"/>
</dbReference>
<dbReference type="InterPro" id="IPR005732">
    <property type="entry name" value="Ribosomal_uS19_bac-type"/>
</dbReference>
<dbReference type="InterPro" id="IPR020934">
    <property type="entry name" value="Ribosomal_uS19_CS"/>
</dbReference>
<dbReference type="InterPro" id="IPR023575">
    <property type="entry name" value="Ribosomal_uS19_SF"/>
</dbReference>
<dbReference type="NCBIfam" id="TIGR01050">
    <property type="entry name" value="rpsS_bact"/>
    <property type="match status" value="1"/>
</dbReference>
<dbReference type="PANTHER" id="PTHR11880">
    <property type="entry name" value="RIBOSOMAL PROTEIN S19P FAMILY MEMBER"/>
    <property type="match status" value="1"/>
</dbReference>
<dbReference type="PANTHER" id="PTHR11880:SF8">
    <property type="entry name" value="SMALL RIBOSOMAL SUBUNIT PROTEIN US19M"/>
    <property type="match status" value="1"/>
</dbReference>
<dbReference type="Pfam" id="PF00203">
    <property type="entry name" value="Ribosomal_S19"/>
    <property type="match status" value="1"/>
</dbReference>
<dbReference type="PIRSF" id="PIRSF002144">
    <property type="entry name" value="Ribosomal_S19"/>
    <property type="match status" value="1"/>
</dbReference>
<dbReference type="PRINTS" id="PR00975">
    <property type="entry name" value="RIBOSOMALS19"/>
</dbReference>
<dbReference type="SUPFAM" id="SSF54570">
    <property type="entry name" value="Ribosomal protein S19"/>
    <property type="match status" value="1"/>
</dbReference>
<dbReference type="PROSITE" id="PS00323">
    <property type="entry name" value="RIBOSOMAL_S19"/>
    <property type="match status" value="1"/>
</dbReference>
<sequence length="92" mass="10472">MPRSLKKGPFIDLHLLKKVEKAMEAGDKKPIKTWSRRSMIIPNMIGLTIAVHNGRQHVPVFVTDEMIGHKLGEFSPTRTYRGHAADKKAKKR</sequence>
<organism>
    <name type="scientific">Shewanella woodyi (strain ATCC 51908 / MS32)</name>
    <dbReference type="NCBI Taxonomy" id="392500"/>
    <lineage>
        <taxon>Bacteria</taxon>
        <taxon>Pseudomonadati</taxon>
        <taxon>Pseudomonadota</taxon>
        <taxon>Gammaproteobacteria</taxon>
        <taxon>Alteromonadales</taxon>
        <taxon>Shewanellaceae</taxon>
        <taxon>Shewanella</taxon>
    </lineage>
</organism>
<protein>
    <recommendedName>
        <fullName evidence="1">Small ribosomal subunit protein uS19</fullName>
    </recommendedName>
    <alternativeName>
        <fullName evidence="2">30S ribosomal protein S19</fullName>
    </alternativeName>
</protein>
<gene>
    <name evidence="1" type="primary">rpsS</name>
    <name type="ordered locus">Swoo_4686</name>
</gene>
<evidence type="ECO:0000255" key="1">
    <source>
        <dbReference type="HAMAP-Rule" id="MF_00531"/>
    </source>
</evidence>
<evidence type="ECO:0000305" key="2"/>
<keyword id="KW-1185">Reference proteome</keyword>
<keyword id="KW-0687">Ribonucleoprotein</keyword>
<keyword id="KW-0689">Ribosomal protein</keyword>
<keyword id="KW-0694">RNA-binding</keyword>
<keyword id="KW-0699">rRNA-binding</keyword>
<comment type="function">
    <text evidence="1">Protein S19 forms a complex with S13 that binds strongly to the 16S ribosomal RNA.</text>
</comment>
<comment type="similarity">
    <text evidence="1">Belongs to the universal ribosomal protein uS19 family.</text>
</comment>
<accession>B1KMX9</accession>